<sequence length="248" mass="28665">MFQKVEGIVIRTTDYGETNKIVTIFSRELGKVSAMARGAKKPKSRLASVSQLMTHGHFLIQMGSGLGTLQQGEIISTMKEIREDIFLTAYASFIVELTDKATEDKKHNPYLFEMLYQTLHYMCEGVDPEVLSLIYQTKMLPVLGMRPYFDTCAICHQETDFVAFSVREGGFLCSRHAEQDQYRIPVGEAVHKLLRLFYHFDLHRLGNVSVKDSTKKQMRLVLNTYYDEYCGIYLKSRRFLEQLDKFQI</sequence>
<evidence type="ECO:0000255" key="1">
    <source>
        <dbReference type="HAMAP-Rule" id="MF_00201"/>
    </source>
</evidence>
<protein>
    <recommendedName>
        <fullName evidence="1">DNA repair protein RecO</fullName>
    </recommendedName>
    <alternativeName>
        <fullName evidence="1">Recombination protein O</fullName>
    </alternativeName>
</protein>
<comment type="function">
    <text evidence="1">Involved in DNA repair and RecF pathway recombination.</text>
</comment>
<comment type="similarity">
    <text evidence="1">Belongs to the RecO family.</text>
</comment>
<accession>Q6HDM2</accession>
<keyword id="KW-0227">DNA damage</keyword>
<keyword id="KW-0233">DNA recombination</keyword>
<keyword id="KW-0234">DNA repair</keyword>
<proteinExistence type="inferred from homology"/>
<dbReference type="EMBL" id="AE017355">
    <property type="protein sequence ID" value="AAT63512.1"/>
    <property type="molecule type" value="Genomic_DNA"/>
</dbReference>
<dbReference type="RefSeq" id="WP_000487010.1">
    <property type="nucleotide sequence ID" value="NC_005957.1"/>
</dbReference>
<dbReference type="RefSeq" id="YP_038354.1">
    <property type="nucleotide sequence ID" value="NC_005957.1"/>
</dbReference>
<dbReference type="SMR" id="Q6HDM2"/>
<dbReference type="GeneID" id="93006802"/>
<dbReference type="KEGG" id="btk:BT9727_4036"/>
<dbReference type="PATRIC" id="fig|281309.8.peg.4306"/>
<dbReference type="HOGENOM" id="CLU_066632_4_0_9"/>
<dbReference type="Proteomes" id="UP000001301">
    <property type="component" value="Chromosome"/>
</dbReference>
<dbReference type="GO" id="GO:0043590">
    <property type="term" value="C:bacterial nucleoid"/>
    <property type="evidence" value="ECO:0007669"/>
    <property type="project" value="TreeGrafter"/>
</dbReference>
<dbReference type="GO" id="GO:0006310">
    <property type="term" value="P:DNA recombination"/>
    <property type="evidence" value="ECO:0007669"/>
    <property type="project" value="UniProtKB-UniRule"/>
</dbReference>
<dbReference type="GO" id="GO:0006302">
    <property type="term" value="P:double-strand break repair"/>
    <property type="evidence" value="ECO:0007669"/>
    <property type="project" value="TreeGrafter"/>
</dbReference>
<dbReference type="Gene3D" id="2.40.50.140">
    <property type="entry name" value="Nucleic acid-binding proteins"/>
    <property type="match status" value="1"/>
</dbReference>
<dbReference type="Gene3D" id="1.20.1440.120">
    <property type="entry name" value="Recombination protein O, C-terminal domain"/>
    <property type="match status" value="1"/>
</dbReference>
<dbReference type="HAMAP" id="MF_00201">
    <property type="entry name" value="RecO"/>
    <property type="match status" value="1"/>
</dbReference>
<dbReference type="InterPro" id="IPR037278">
    <property type="entry name" value="ARFGAP/RecO"/>
</dbReference>
<dbReference type="InterPro" id="IPR022572">
    <property type="entry name" value="DNA_rep/recomb_RecO_N"/>
</dbReference>
<dbReference type="InterPro" id="IPR012340">
    <property type="entry name" value="NA-bd_OB-fold"/>
</dbReference>
<dbReference type="InterPro" id="IPR003717">
    <property type="entry name" value="RecO"/>
</dbReference>
<dbReference type="InterPro" id="IPR042242">
    <property type="entry name" value="RecO_C"/>
</dbReference>
<dbReference type="NCBIfam" id="TIGR00613">
    <property type="entry name" value="reco"/>
    <property type="match status" value="1"/>
</dbReference>
<dbReference type="PANTHER" id="PTHR33991">
    <property type="entry name" value="DNA REPAIR PROTEIN RECO"/>
    <property type="match status" value="1"/>
</dbReference>
<dbReference type="PANTHER" id="PTHR33991:SF1">
    <property type="entry name" value="DNA REPAIR PROTEIN RECO"/>
    <property type="match status" value="1"/>
</dbReference>
<dbReference type="Pfam" id="PF02565">
    <property type="entry name" value="RecO_C"/>
    <property type="match status" value="1"/>
</dbReference>
<dbReference type="Pfam" id="PF11967">
    <property type="entry name" value="RecO_N"/>
    <property type="match status" value="1"/>
</dbReference>
<dbReference type="SUPFAM" id="SSF57863">
    <property type="entry name" value="ArfGap/RecO-like zinc finger"/>
    <property type="match status" value="1"/>
</dbReference>
<dbReference type="SUPFAM" id="SSF50249">
    <property type="entry name" value="Nucleic acid-binding proteins"/>
    <property type="match status" value="1"/>
</dbReference>
<reference key="1">
    <citation type="journal article" date="2006" name="J. Bacteriol.">
        <title>Pathogenomic sequence analysis of Bacillus cereus and Bacillus thuringiensis isolates closely related to Bacillus anthracis.</title>
        <authorList>
            <person name="Han C.S."/>
            <person name="Xie G."/>
            <person name="Challacombe J.F."/>
            <person name="Altherr M.R."/>
            <person name="Bhotika S.S."/>
            <person name="Bruce D."/>
            <person name="Campbell C.S."/>
            <person name="Campbell M.L."/>
            <person name="Chen J."/>
            <person name="Chertkov O."/>
            <person name="Cleland C."/>
            <person name="Dimitrijevic M."/>
            <person name="Doggett N.A."/>
            <person name="Fawcett J.J."/>
            <person name="Glavina T."/>
            <person name="Goodwin L.A."/>
            <person name="Hill K.K."/>
            <person name="Hitchcock P."/>
            <person name="Jackson P.J."/>
            <person name="Keim P."/>
            <person name="Kewalramani A.R."/>
            <person name="Longmire J."/>
            <person name="Lucas S."/>
            <person name="Malfatti S."/>
            <person name="McMurry K."/>
            <person name="Meincke L.J."/>
            <person name="Misra M."/>
            <person name="Moseman B.L."/>
            <person name="Mundt M."/>
            <person name="Munk A.C."/>
            <person name="Okinaka R.T."/>
            <person name="Parson-Quintana B."/>
            <person name="Reilly L.P."/>
            <person name="Richardson P."/>
            <person name="Robinson D.L."/>
            <person name="Rubin E."/>
            <person name="Saunders E."/>
            <person name="Tapia R."/>
            <person name="Tesmer J.G."/>
            <person name="Thayer N."/>
            <person name="Thompson L.S."/>
            <person name="Tice H."/>
            <person name="Ticknor L.O."/>
            <person name="Wills P.L."/>
            <person name="Brettin T.S."/>
            <person name="Gilna P."/>
        </authorList>
    </citation>
    <scope>NUCLEOTIDE SEQUENCE [LARGE SCALE GENOMIC DNA]</scope>
    <source>
        <strain>97-27</strain>
    </source>
</reference>
<organism>
    <name type="scientific">Bacillus thuringiensis subsp. konkukian (strain 97-27)</name>
    <dbReference type="NCBI Taxonomy" id="281309"/>
    <lineage>
        <taxon>Bacteria</taxon>
        <taxon>Bacillati</taxon>
        <taxon>Bacillota</taxon>
        <taxon>Bacilli</taxon>
        <taxon>Bacillales</taxon>
        <taxon>Bacillaceae</taxon>
        <taxon>Bacillus</taxon>
        <taxon>Bacillus cereus group</taxon>
    </lineage>
</organism>
<feature type="chain" id="PRO_0000204930" description="DNA repair protein RecO">
    <location>
        <begin position="1"/>
        <end position="248"/>
    </location>
</feature>
<name>RECO_BACHK</name>
<gene>
    <name evidence="1" type="primary">recO</name>
    <name type="ordered locus">BT9727_4036</name>
</gene>